<comment type="function">
    <text evidence="2">Component of the ubiquinol-cytochrome c reductase complex (complex III or cytochrome b-c1 complex) that is part of the mitochondrial respiratory chain. The b-c1 complex mediates electron transfer from ubiquinol to cytochrome c. Contributes to the generation of a proton gradient across the mitochondrial membrane that is then used for ATP synthesis.</text>
</comment>
<comment type="cofactor">
    <cofactor evidence="2">
        <name>heme b</name>
        <dbReference type="ChEBI" id="CHEBI:60344"/>
    </cofactor>
    <text evidence="2">Binds 2 heme b groups non-covalently.</text>
</comment>
<comment type="subunit">
    <text evidence="2">The cytochrome bc1 complex contains 11 subunits: 3 respiratory subunits (MT-CYB, CYC1 and UQCRFS1), 2 core proteins (UQCRC1 and UQCRC2) and 6 low-molecular weight proteins (UQCRH/QCR6, UQCRB/QCR7, UQCRQ/QCR8, UQCR10/QCR9, UQCR11/QCR10 and a cleavage product of UQCRFS1). This cytochrome bc1 complex then forms a dimer.</text>
</comment>
<comment type="subcellular location">
    <subcellularLocation>
        <location evidence="2">Mitochondrion inner membrane</location>
        <topology evidence="2">Multi-pass membrane protein</topology>
    </subcellularLocation>
</comment>
<comment type="miscellaneous">
    <text evidence="1">Heme 1 (or BL or b562) is low-potential and absorbs at about 562 nm, and heme 2 (or BH or b566) is high-potential and absorbs at about 566 nm.</text>
</comment>
<comment type="similarity">
    <text evidence="3 4">Belongs to the cytochrome b family.</text>
</comment>
<comment type="caution">
    <text evidence="2">The full-length protein contains only eight transmembrane helices, not nine as predicted by bioinformatics tools.</text>
</comment>
<protein>
    <recommendedName>
        <fullName>Cytochrome b</fullName>
    </recommendedName>
    <alternativeName>
        <fullName>Complex III subunit 3</fullName>
    </alternativeName>
    <alternativeName>
        <fullName>Complex III subunit III</fullName>
    </alternativeName>
    <alternativeName>
        <fullName>Cytochrome b-c1 complex subunit 3</fullName>
    </alternativeName>
    <alternativeName>
        <fullName>Ubiquinol-cytochrome-c reductase complex cytochrome b subunit</fullName>
    </alternativeName>
</protein>
<dbReference type="EMBL" id="AF076057">
    <property type="protein sequence ID" value="AAC68614.1"/>
    <property type="molecule type" value="Genomic_DNA"/>
</dbReference>
<dbReference type="SMR" id="O79204"/>
<dbReference type="GO" id="GO:0005743">
    <property type="term" value="C:mitochondrial inner membrane"/>
    <property type="evidence" value="ECO:0007669"/>
    <property type="project" value="UniProtKB-SubCell"/>
</dbReference>
<dbReference type="GO" id="GO:0045275">
    <property type="term" value="C:respiratory chain complex III"/>
    <property type="evidence" value="ECO:0007669"/>
    <property type="project" value="InterPro"/>
</dbReference>
<dbReference type="GO" id="GO:0046872">
    <property type="term" value="F:metal ion binding"/>
    <property type="evidence" value="ECO:0007669"/>
    <property type="project" value="UniProtKB-KW"/>
</dbReference>
<dbReference type="GO" id="GO:0008121">
    <property type="term" value="F:ubiquinol-cytochrome-c reductase activity"/>
    <property type="evidence" value="ECO:0007669"/>
    <property type="project" value="InterPro"/>
</dbReference>
<dbReference type="GO" id="GO:0006122">
    <property type="term" value="P:mitochondrial electron transport, ubiquinol to cytochrome c"/>
    <property type="evidence" value="ECO:0007669"/>
    <property type="project" value="TreeGrafter"/>
</dbReference>
<dbReference type="CDD" id="cd00290">
    <property type="entry name" value="cytochrome_b_C"/>
    <property type="match status" value="1"/>
</dbReference>
<dbReference type="CDD" id="cd00284">
    <property type="entry name" value="Cytochrome_b_N"/>
    <property type="match status" value="1"/>
</dbReference>
<dbReference type="FunFam" id="1.20.810.10:FF:000002">
    <property type="entry name" value="Cytochrome b"/>
    <property type="match status" value="1"/>
</dbReference>
<dbReference type="Gene3D" id="1.20.810.10">
    <property type="entry name" value="Cytochrome Bc1 Complex, Chain C"/>
    <property type="match status" value="1"/>
</dbReference>
<dbReference type="InterPro" id="IPR005798">
    <property type="entry name" value="Cyt_b/b6_C"/>
</dbReference>
<dbReference type="InterPro" id="IPR036150">
    <property type="entry name" value="Cyt_b/b6_C_sf"/>
</dbReference>
<dbReference type="InterPro" id="IPR005797">
    <property type="entry name" value="Cyt_b/b6_N"/>
</dbReference>
<dbReference type="InterPro" id="IPR027387">
    <property type="entry name" value="Cytb/b6-like_sf"/>
</dbReference>
<dbReference type="InterPro" id="IPR030689">
    <property type="entry name" value="Cytochrome_b"/>
</dbReference>
<dbReference type="InterPro" id="IPR048260">
    <property type="entry name" value="Cytochrome_b_C_euk/bac"/>
</dbReference>
<dbReference type="InterPro" id="IPR048259">
    <property type="entry name" value="Cytochrome_b_N_euk/bac"/>
</dbReference>
<dbReference type="InterPro" id="IPR016174">
    <property type="entry name" value="Di-haem_cyt_TM"/>
</dbReference>
<dbReference type="PANTHER" id="PTHR19271">
    <property type="entry name" value="CYTOCHROME B"/>
    <property type="match status" value="1"/>
</dbReference>
<dbReference type="PANTHER" id="PTHR19271:SF16">
    <property type="entry name" value="CYTOCHROME B"/>
    <property type="match status" value="1"/>
</dbReference>
<dbReference type="Pfam" id="PF00032">
    <property type="entry name" value="Cytochrom_B_C"/>
    <property type="match status" value="1"/>
</dbReference>
<dbReference type="Pfam" id="PF00033">
    <property type="entry name" value="Cytochrome_B"/>
    <property type="match status" value="1"/>
</dbReference>
<dbReference type="PIRSF" id="PIRSF038885">
    <property type="entry name" value="COB"/>
    <property type="match status" value="1"/>
</dbReference>
<dbReference type="SUPFAM" id="SSF81648">
    <property type="entry name" value="a domain/subunit of cytochrome bc1 complex (Ubiquinol-cytochrome c reductase)"/>
    <property type="match status" value="1"/>
</dbReference>
<dbReference type="SUPFAM" id="SSF81342">
    <property type="entry name" value="Transmembrane di-heme cytochromes"/>
    <property type="match status" value="1"/>
</dbReference>
<dbReference type="PROSITE" id="PS51003">
    <property type="entry name" value="CYTB_CTER"/>
    <property type="match status" value="1"/>
</dbReference>
<dbReference type="PROSITE" id="PS51002">
    <property type="entry name" value="CYTB_NTER"/>
    <property type="match status" value="1"/>
</dbReference>
<accession>O79204</accession>
<organism>
    <name type="scientific">Halobaena caerulea</name>
    <name type="common">Blue petrel</name>
    <dbReference type="NCBI Taxonomy" id="79655"/>
    <lineage>
        <taxon>Eukaryota</taxon>
        <taxon>Metazoa</taxon>
        <taxon>Chordata</taxon>
        <taxon>Craniata</taxon>
        <taxon>Vertebrata</taxon>
        <taxon>Euteleostomi</taxon>
        <taxon>Archelosauria</taxon>
        <taxon>Archosauria</taxon>
        <taxon>Dinosauria</taxon>
        <taxon>Saurischia</taxon>
        <taxon>Theropoda</taxon>
        <taxon>Coelurosauria</taxon>
        <taxon>Aves</taxon>
        <taxon>Neognathae</taxon>
        <taxon>Neoaves</taxon>
        <taxon>Aequornithes</taxon>
        <taxon>Procellariiformes</taxon>
        <taxon>Procellariidae</taxon>
        <taxon>Halobaena</taxon>
    </lineage>
</organism>
<sequence>MAPNLRKSHPLLKMVNSSLIDLPTPSNISSWWNFGSLLGICLMTQILTGLLLAMHYTADTTLAFSSVAHTCRNVQYGWLIRNLHANGASFFFICIYFHIGRGFYYGSYLYKETWNTGVVLLLTLMATAFVGYVLPWGQMSFWGATVITNLFSAIPYIGQTLVEWAWGGFSVDNPTLTRFFALHFLLPFMIAGLTLIHLTFLHESGSNNPLGIVSNCDKIPFHPYFTLKDILGFTLMLLPLTTLALFSPNLLGDPENFTPANPLVTPPHIKPEWYFLFAYAILRSIPNKLGGVLALAASVLILFLIPFLHKAKQRTMTFRPLSQLLFWVLVANLLILTWVGSQPVEHPFIIIGQLASLTYFAILLVLFPIIGTLENKMLNY</sequence>
<gene>
    <name type="primary">MT-CYB</name>
    <name type="synonym">COB</name>
    <name type="synonym">CYTB</name>
    <name type="synonym">MTCYB</name>
</gene>
<evidence type="ECO:0000250" key="1"/>
<evidence type="ECO:0000250" key="2">
    <source>
        <dbReference type="UniProtKB" id="P00157"/>
    </source>
</evidence>
<evidence type="ECO:0000255" key="3">
    <source>
        <dbReference type="PROSITE-ProRule" id="PRU00967"/>
    </source>
</evidence>
<evidence type="ECO:0000255" key="4">
    <source>
        <dbReference type="PROSITE-ProRule" id="PRU00968"/>
    </source>
</evidence>
<name>CYB_HALCA</name>
<proteinExistence type="inferred from homology"/>
<feature type="chain" id="PRO_0000061020" description="Cytochrome b">
    <location>
        <begin position="1"/>
        <end position="380"/>
    </location>
</feature>
<feature type="transmembrane region" description="Helical" evidence="2">
    <location>
        <begin position="34"/>
        <end position="54"/>
    </location>
</feature>
<feature type="transmembrane region" description="Helical" evidence="2">
    <location>
        <begin position="78"/>
        <end position="99"/>
    </location>
</feature>
<feature type="transmembrane region" description="Helical" evidence="2">
    <location>
        <begin position="114"/>
        <end position="134"/>
    </location>
</feature>
<feature type="transmembrane region" description="Helical" evidence="2">
    <location>
        <begin position="179"/>
        <end position="199"/>
    </location>
</feature>
<feature type="transmembrane region" description="Helical" evidence="2">
    <location>
        <begin position="227"/>
        <end position="247"/>
    </location>
</feature>
<feature type="transmembrane region" description="Helical" evidence="2">
    <location>
        <begin position="289"/>
        <end position="309"/>
    </location>
</feature>
<feature type="transmembrane region" description="Helical" evidence="2">
    <location>
        <begin position="321"/>
        <end position="341"/>
    </location>
</feature>
<feature type="transmembrane region" description="Helical" evidence="2">
    <location>
        <begin position="348"/>
        <end position="368"/>
    </location>
</feature>
<feature type="binding site" description="axial binding residue" evidence="2">
    <location>
        <position position="84"/>
    </location>
    <ligand>
        <name>heme b</name>
        <dbReference type="ChEBI" id="CHEBI:60344"/>
        <label>b562</label>
    </ligand>
    <ligandPart>
        <name>Fe</name>
        <dbReference type="ChEBI" id="CHEBI:18248"/>
    </ligandPart>
</feature>
<feature type="binding site" description="axial binding residue" evidence="2">
    <location>
        <position position="98"/>
    </location>
    <ligand>
        <name>heme b</name>
        <dbReference type="ChEBI" id="CHEBI:60344"/>
        <label>b566</label>
    </ligand>
    <ligandPart>
        <name>Fe</name>
        <dbReference type="ChEBI" id="CHEBI:18248"/>
    </ligandPart>
</feature>
<feature type="binding site" description="axial binding residue" evidence="2">
    <location>
        <position position="183"/>
    </location>
    <ligand>
        <name>heme b</name>
        <dbReference type="ChEBI" id="CHEBI:60344"/>
        <label>b562</label>
    </ligand>
    <ligandPart>
        <name>Fe</name>
        <dbReference type="ChEBI" id="CHEBI:18248"/>
    </ligandPart>
</feature>
<feature type="binding site" description="axial binding residue" evidence="2">
    <location>
        <position position="197"/>
    </location>
    <ligand>
        <name>heme b</name>
        <dbReference type="ChEBI" id="CHEBI:60344"/>
        <label>b566</label>
    </ligand>
    <ligandPart>
        <name>Fe</name>
        <dbReference type="ChEBI" id="CHEBI:18248"/>
    </ligandPart>
</feature>
<feature type="binding site" evidence="2">
    <location>
        <position position="202"/>
    </location>
    <ligand>
        <name>a ubiquinone</name>
        <dbReference type="ChEBI" id="CHEBI:16389"/>
    </ligand>
</feature>
<reference key="1">
    <citation type="journal article" date="1998" name="Mol. Biol. Evol.">
        <title>Body size effects and rates of cytochrome-b evolution in tube-nosed seabirds.</title>
        <authorList>
            <person name="Nunn G.B."/>
            <person name="Stanley S.E."/>
        </authorList>
    </citation>
    <scope>NUCLEOTIDE SEQUENCE [GENOMIC DNA]</scope>
    <source>
        <strain>Isolate BP-MI-1</strain>
    </source>
</reference>
<geneLocation type="mitochondrion"/>
<keyword id="KW-0249">Electron transport</keyword>
<keyword id="KW-0349">Heme</keyword>
<keyword id="KW-0408">Iron</keyword>
<keyword id="KW-0472">Membrane</keyword>
<keyword id="KW-0479">Metal-binding</keyword>
<keyword id="KW-0496">Mitochondrion</keyword>
<keyword id="KW-0999">Mitochondrion inner membrane</keyword>
<keyword id="KW-0679">Respiratory chain</keyword>
<keyword id="KW-0812">Transmembrane</keyword>
<keyword id="KW-1133">Transmembrane helix</keyword>
<keyword id="KW-0813">Transport</keyword>
<keyword id="KW-0830">Ubiquinone</keyword>